<reference key="1">
    <citation type="journal article" date="1992" name="Proc. Natl. Acad. Sci. U.S.A.">
        <title>Cloning of a mu-class glutathione S-transferase gene and identification of the glucocorticoid regulatory domains in its 5' flanking sequence.</title>
        <authorList>
            <person name="Fan W.M."/>
            <person name="Trifiletti R."/>
            <person name="Norris J.S."/>
            <person name="Cooper T.M."/>
        </authorList>
    </citation>
    <scope>NUCLEOTIDE SEQUENCE [GENOMIC DNA]</scope>
    <source>
        <tissue>Smooth muscle</tissue>
    </source>
</reference>
<reference key="2">
    <citation type="journal article" date="1991" name="Mol. Endocrinol.">
        <title>Cloning of a mu-class glutathione S-transferase complementary DNA and characterization of its glucocorticoid inducibility in a smooth muscle tumor cell line.</title>
        <authorList>
            <person name="Norris J.S."/>
            <person name="Schwartz D.A."/>
            <person name="Macleod S.L."/>
            <person name="Fan W.M."/>
            <person name="O'Brien T.J."/>
            <person name="Harris S.E."/>
            <person name="Trifiletti R."/>
            <person name="Cornett L.E."/>
            <person name="Cooper T.M."/>
            <person name="Levi W.M."/>
            <person name="Smith R.G."/>
        </authorList>
    </citation>
    <scope>NUCLEOTIDE SEQUENCE</scope>
    <source>
        <tissue>Smooth muscle</tissue>
    </source>
</reference>
<protein>
    <recommendedName>
        <fullName>Glutathione S-transferase</fullName>
        <ecNumber>2.5.1.18</ecNumber>
    </recommendedName>
    <alternativeName>
        <fullName>GST class-mu</fullName>
    </alternativeName>
</protein>
<proteinExistence type="evidence at transcript level"/>
<comment type="function">
    <text>Conjugation of reduced glutathione to a wide number of exogenous and endogenous hydrophobic electrophiles.</text>
</comment>
<comment type="catalytic activity">
    <reaction>
        <text>RX + glutathione = an S-substituted glutathione + a halide anion + H(+)</text>
        <dbReference type="Rhea" id="RHEA:16437"/>
        <dbReference type="ChEBI" id="CHEBI:15378"/>
        <dbReference type="ChEBI" id="CHEBI:16042"/>
        <dbReference type="ChEBI" id="CHEBI:17792"/>
        <dbReference type="ChEBI" id="CHEBI:57925"/>
        <dbReference type="ChEBI" id="CHEBI:90779"/>
        <dbReference type="EC" id="2.5.1.18"/>
    </reaction>
</comment>
<comment type="subunit">
    <text>Homodimer.</text>
</comment>
<comment type="subcellular location">
    <subcellularLocation>
        <location>Cytoplasm</location>
    </subcellularLocation>
</comment>
<comment type="similarity">
    <text evidence="3">Belongs to the GST superfamily. Mu family.</text>
</comment>
<name>GSTMU_MESAU</name>
<organism>
    <name type="scientific">Mesocricetus auratus</name>
    <name type="common">Golden hamster</name>
    <dbReference type="NCBI Taxonomy" id="10036"/>
    <lineage>
        <taxon>Eukaryota</taxon>
        <taxon>Metazoa</taxon>
        <taxon>Chordata</taxon>
        <taxon>Craniata</taxon>
        <taxon>Vertebrata</taxon>
        <taxon>Euteleostomi</taxon>
        <taxon>Mammalia</taxon>
        <taxon>Eutheria</taxon>
        <taxon>Euarchontoglires</taxon>
        <taxon>Glires</taxon>
        <taxon>Rodentia</taxon>
        <taxon>Myomorpha</taxon>
        <taxon>Muroidea</taxon>
        <taxon>Cricetidae</taxon>
        <taxon>Cricetinae</taxon>
        <taxon>Mesocricetus</taxon>
    </lineage>
</organism>
<keyword id="KW-0963">Cytoplasm</keyword>
<keyword id="KW-1185">Reference proteome</keyword>
<keyword id="KW-0808">Transferase</keyword>
<evidence type="ECO:0000250" key="1"/>
<evidence type="ECO:0000250" key="2">
    <source>
        <dbReference type="UniProtKB" id="P08515"/>
    </source>
</evidence>
<evidence type="ECO:0000305" key="3"/>
<dbReference type="EC" id="2.5.1.18"/>
<dbReference type="EMBL" id="M59772">
    <property type="protein sequence ID" value="AAA37075.1"/>
    <property type="molecule type" value="mRNA"/>
</dbReference>
<dbReference type="EMBL" id="X61033">
    <property type="protein sequence ID" value="CAA43368.1"/>
    <property type="molecule type" value="Genomic_DNA"/>
</dbReference>
<dbReference type="PIR" id="A23732">
    <property type="entry name" value="A23732"/>
</dbReference>
<dbReference type="RefSeq" id="NP_001268559.1">
    <property type="nucleotide sequence ID" value="NM_001281630.1"/>
</dbReference>
<dbReference type="SMR" id="P30116"/>
<dbReference type="STRING" id="10036.ENSMAUP00000014487"/>
<dbReference type="Ensembl" id="ENSMAUT00000018406">
    <property type="protein sequence ID" value="ENSMAUP00000014487"/>
    <property type="gene ID" value="ENSMAUG00000014229"/>
</dbReference>
<dbReference type="GeneID" id="101829268"/>
<dbReference type="KEGG" id="maua:101829268"/>
<dbReference type="eggNOG" id="KOG1695">
    <property type="taxonomic scope" value="Eukaryota"/>
</dbReference>
<dbReference type="OrthoDB" id="4951845at2759"/>
<dbReference type="Proteomes" id="UP000189706">
    <property type="component" value="Unplaced"/>
</dbReference>
<dbReference type="GO" id="GO:0005829">
    <property type="term" value="C:cytosol"/>
    <property type="evidence" value="ECO:0007669"/>
    <property type="project" value="Ensembl"/>
</dbReference>
<dbReference type="GO" id="GO:0005739">
    <property type="term" value="C:mitochondrion"/>
    <property type="evidence" value="ECO:0007669"/>
    <property type="project" value="Ensembl"/>
</dbReference>
<dbReference type="GO" id="GO:0004364">
    <property type="term" value="F:glutathione transferase activity"/>
    <property type="evidence" value="ECO:0007669"/>
    <property type="project" value="UniProtKB-EC"/>
</dbReference>
<dbReference type="GO" id="GO:0042802">
    <property type="term" value="F:identical protein binding"/>
    <property type="evidence" value="ECO:0007669"/>
    <property type="project" value="Ensembl"/>
</dbReference>
<dbReference type="GO" id="GO:0006749">
    <property type="term" value="P:glutathione metabolic process"/>
    <property type="evidence" value="ECO:0007669"/>
    <property type="project" value="TreeGrafter"/>
</dbReference>
<dbReference type="CDD" id="cd03209">
    <property type="entry name" value="GST_C_Mu"/>
    <property type="match status" value="1"/>
</dbReference>
<dbReference type="CDD" id="cd03075">
    <property type="entry name" value="GST_N_Mu"/>
    <property type="match status" value="1"/>
</dbReference>
<dbReference type="FunFam" id="1.20.1050.10:FF:000083">
    <property type="entry name" value="Glutathione S-transferase Mu 1"/>
    <property type="match status" value="1"/>
</dbReference>
<dbReference type="FunFam" id="3.40.30.10:FF:000603">
    <property type="entry name" value="Glutathione S-transferase Mu 1"/>
    <property type="match status" value="1"/>
</dbReference>
<dbReference type="Gene3D" id="1.20.1050.10">
    <property type="match status" value="1"/>
</dbReference>
<dbReference type="Gene3D" id="3.40.30.10">
    <property type="entry name" value="Glutaredoxin"/>
    <property type="match status" value="1"/>
</dbReference>
<dbReference type="InterPro" id="IPR010987">
    <property type="entry name" value="Glutathione-S-Trfase_C-like"/>
</dbReference>
<dbReference type="InterPro" id="IPR036282">
    <property type="entry name" value="Glutathione-S-Trfase_C_sf"/>
</dbReference>
<dbReference type="InterPro" id="IPR040079">
    <property type="entry name" value="Glutathione_S-Trfase"/>
</dbReference>
<dbReference type="InterPro" id="IPR004045">
    <property type="entry name" value="Glutathione_S-Trfase_N"/>
</dbReference>
<dbReference type="InterPro" id="IPR004046">
    <property type="entry name" value="GST_C"/>
</dbReference>
<dbReference type="InterPro" id="IPR003081">
    <property type="entry name" value="GST_mu"/>
</dbReference>
<dbReference type="InterPro" id="IPR050213">
    <property type="entry name" value="GST_superfamily"/>
</dbReference>
<dbReference type="InterPro" id="IPR036249">
    <property type="entry name" value="Thioredoxin-like_sf"/>
</dbReference>
<dbReference type="PANTHER" id="PTHR11571">
    <property type="entry name" value="GLUTATHIONE S-TRANSFERASE"/>
    <property type="match status" value="1"/>
</dbReference>
<dbReference type="PANTHER" id="PTHR11571:SF247">
    <property type="entry name" value="GLUTATHIONE S-TRANSFERASE MU 1"/>
    <property type="match status" value="1"/>
</dbReference>
<dbReference type="Pfam" id="PF00043">
    <property type="entry name" value="GST_C"/>
    <property type="match status" value="1"/>
</dbReference>
<dbReference type="Pfam" id="PF02798">
    <property type="entry name" value="GST_N"/>
    <property type="match status" value="1"/>
</dbReference>
<dbReference type="PRINTS" id="PR01267">
    <property type="entry name" value="GSTRNSFRASEM"/>
</dbReference>
<dbReference type="SFLD" id="SFLDG01205">
    <property type="entry name" value="AMPS.1"/>
    <property type="match status" value="1"/>
</dbReference>
<dbReference type="SFLD" id="SFLDS00019">
    <property type="entry name" value="Glutathione_Transferase_(cytos"/>
    <property type="match status" value="1"/>
</dbReference>
<dbReference type="SUPFAM" id="SSF47616">
    <property type="entry name" value="GST C-terminal domain-like"/>
    <property type="match status" value="1"/>
</dbReference>
<dbReference type="SUPFAM" id="SSF52833">
    <property type="entry name" value="Thioredoxin-like"/>
    <property type="match status" value="1"/>
</dbReference>
<dbReference type="PROSITE" id="PS50405">
    <property type="entry name" value="GST_CTER"/>
    <property type="match status" value="1"/>
</dbReference>
<dbReference type="PROSITE" id="PS50404">
    <property type="entry name" value="GST_NTER"/>
    <property type="match status" value="1"/>
</dbReference>
<feature type="chain" id="PRO_0000185836" description="Glutathione S-transferase">
    <location>
        <begin position="1"/>
        <end position="218"/>
    </location>
</feature>
<feature type="domain" description="GST N-terminal">
    <location>
        <begin position="2"/>
        <end position="88"/>
    </location>
</feature>
<feature type="domain" description="GST C-terminal">
    <location>
        <begin position="90"/>
        <end position="208"/>
    </location>
</feature>
<feature type="binding site" evidence="2">
    <location>
        <begin position="7"/>
        <end position="8"/>
    </location>
    <ligand>
        <name>glutathione</name>
        <dbReference type="ChEBI" id="CHEBI:57925"/>
    </ligand>
</feature>
<feature type="binding site" evidence="2">
    <location>
        <begin position="46"/>
        <end position="50"/>
    </location>
    <ligand>
        <name>glutathione</name>
        <dbReference type="ChEBI" id="CHEBI:57925"/>
    </ligand>
</feature>
<feature type="binding site" evidence="2">
    <location>
        <begin position="59"/>
        <end position="60"/>
    </location>
    <ligand>
        <name>glutathione</name>
        <dbReference type="ChEBI" id="CHEBI:57925"/>
    </ligand>
</feature>
<feature type="binding site" evidence="2">
    <location>
        <begin position="72"/>
        <end position="73"/>
    </location>
    <ligand>
        <name>glutathione</name>
        <dbReference type="ChEBI" id="CHEBI:57925"/>
    </ligand>
</feature>
<feature type="binding site" evidence="1">
    <location>
        <position position="116"/>
    </location>
    <ligand>
        <name>substrate</name>
    </ligand>
</feature>
<sequence length="218" mass="25690">MPVTLGYWDIRGLAHAIRLLLEYTDTSYEEKKYTMGDAPNFDRSQWLNEKFKLGLDFPNLPYLIDGSHKITQSNAILRYIARKHDLCGETEEERIQLDILENQAMDTRMQLAMVCYSPDFEKRKPEYLEGLPEKMKLYSEFLGKRSWFAGDKITYVDFLIYDVLDQHRIFAPKCLDAFPNLKDFLARFEGLKKISDYMKSSRFSCKQIFAKMAVWNSK</sequence>
<accession>P30116</accession>